<accession>A7HXM4</accession>
<organism>
    <name type="scientific">Parvibaculum lavamentivorans (strain DS-1 / DSM 13023 / NCIMB 13966)</name>
    <dbReference type="NCBI Taxonomy" id="402881"/>
    <lineage>
        <taxon>Bacteria</taxon>
        <taxon>Pseudomonadati</taxon>
        <taxon>Pseudomonadota</taxon>
        <taxon>Alphaproteobacteria</taxon>
        <taxon>Hyphomicrobiales</taxon>
        <taxon>Parvibaculaceae</taxon>
        <taxon>Parvibaculum</taxon>
    </lineage>
</organism>
<protein>
    <recommendedName>
        <fullName evidence="1">Phosphopantetheine adenylyltransferase</fullName>
        <ecNumber evidence="1">2.7.7.3</ecNumber>
    </recommendedName>
    <alternativeName>
        <fullName evidence="1">Dephospho-CoA pyrophosphorylase</fullName>
    </alternativeName>
    <alternativeName>
        <fullName evidence="1">Pantetheine-phosphate adenylyltransferase</fullName>
        <shortName evidence="1">PPAT</shortName>
    </alternativeName>
</protein>
<dbReference type="EC" id="2.7.7.3" evidence="1"/>
<dbReference type="EMBL" id="CP000774">
    <property type="protein sequence ID" value="ABS64657.1"/>
    <property type="molecule type" value="Genomic_DNA"/>
</dbReference>
<dbReference type="RefSeq" id="WP_012111978.1">
    <property type="nucleotide sequence ID" value="NC_009719.1"/>
</dbReference>
<dbReference type="SMR" id="A7HXM4"/>
<dbReference type="STRING" id="402881.Plav_3050"/>
<dbReference type="KEGG" id="pla:Plav_3050"/>
<dbReference type="eggNOG" id="COG0669">
    <property type="taxonomic scope" value="Bacteria"/>
</dbReference>
<dbReference type="HOGENOM" id="CLU_100149_0_1_5"/>
<dbReference type="OrthoDB" id="9806661at2"/>
<dbReference type="UniPathway" id="UPA00241">
    <property type="reaction ID" value="UER00355"/>
</dbReference>
<dbReference type="Proteomes" id="UP000006377">
    <property type="component" value="Chromosome"/>
</dbReference>
<dbReference type="GO" id="GO:0005737">
    <property type="term" value="C:cytoplasm"/>
    <property type="evidence" value="ECO:0007669"/>
    <property type="project" value="UniProtKB-SubCell"/>
</dbReference>
<dbReference type="GO" id="GO:0005524">
    <property type="term" value="F:ATP binding"/>
    <property type="evidence" value="ECO:0007669"/>
    <property type="project" value="UniProtKB-KW"/>
</dbReference>
<dbReference type="GO" id="GO:0004595">
    <property type="term" value="F:pantetheine-phosphate adenylyltransferase activity"/>
    <property type="evidence" value="ECO:0007669"/>
    <property type="project" value="UniProtKB-UniRule"/>
</dbReference>
<dbReference type="GO" id="GO:0015937">
    <property type="term" value="P:coenzyme A biosynthetic process"/>
    <property type="evidence" value="ECO:0007669"/>
    <property type="project" value="UniProtKB-UniRule"/>
</dbReference>
<dbReference type="CDD" id="cd02163">
    <property type="entry name" value="PPAT"/>
    <property type="match status" value="1"/>
</dbReference>
<dbReference type="Gene3D" id="3.40.50.620">
    <property type="entry name" value="HUPs"/>
    <property type="match status" value="1"/>
</dbReference>
<dbReference type="HAMAP" id="MF_00151">
    <property type="entry name" value="PPAT_bact"/>
    <property type="match status" value="1"/>
</dbReference>
<dbReference type="InterPro" id="IPR004821">
    <property type="entry name" value="Cyt_trans-like"/>
</dbReference>
<dbReference type="InterPro" id="IPR001980">
    <property type="entry name" value="PPAT"/>
</dbReference>
<dbReference type="InterPro" id="IPR014729">
    <property type="entry name" value="Rossmann-like_a/b/a_fold"/>
</dbReference>
<dbReference type="NCBIfam" id="TIGR01510">
    <property type="entry name" value="coaD_prev_kdtB"/>
    <property type="match status" value="1"/>
</dbReference>
<dbReference type="NCBIfam" id="TIGR00125">
    <property type="entry name" value="cyt_tran_rel"/>
    <property type="match status" value="1"/>
</dbReference>
<dbReference type="PANTHER" id="PTHR21342">
    <property type="entry name" value="PHOSPHOPANTETHEINE ADENYLYLTRANSFERASE"/>
    <property type="match status" value="1"/>
</dbReference>
<dbReference type="PANTHER" id="PTHR21342:SF1">
    <property type="entry name" value="PHOSPHOPANTETHEINE ADENYLYLTRANSFERASE"/>
    <property type="match status" value="1"/>
</dbReference>
<dbReference type="Pfam" id="PF01467">
    <property type="entry name" value="CTP_transf_like"/>
    <property type="match status" value="1"/>
</dbReference>
<dbReference type="PRINTS" id="PR01020">
    <property type="entry name" value="LPSBIOSNTHSS"/>
</dbReference>
<dbReference type="SUPFAM" id="SSF52374">
    <property type="entry name" value="Nucleotidylyl transferase"/>
    <property type="match status" value="1"/>
</dbReference>
<feature type="chain" id="PRO_1000071522" description="Phosphopantetheine adenylyltransferase">
    <location>
        <begin position="1"/>
        <end position="170"/>
    </location>
</feature>
<feature type="binding site" evidence="1">
    <location>
        <begin position="10"/>
        <end position="11"/>
    </location>
    <ligand>
        <name>ATP</name>
        <dbReference type="ChEBI" id="CHEBI:30616"/>
    </ligand>
</feature>
<feature type="binding site" evidence="1">
    <location>
        <position position="10"/>
    </location>
    <ligand>
        <name>substrate</name>
    </ligand>
</feature>
<feature type="binding site" evidence="1">
    <location>
        <position position="18"/>
    </location>
    <ligand>
        <name>ATP</name>
        <dbReference type="ChEBI" id="CHEBI:30616"/>
    </ligand>
</feature>
<feature type="binding site" evidence="1">
    <location>
        <position position="42"/>
    </location>
    <ligand>
        <name>substrate</name>
    </ligand>
</feature>
<feature type="binding site" evidence="1">
    <location>
        <position position="79"/>
    </location>
    <ligand>
        <name>substrate</name>
    </ligand>
</feature>
<feature type="binding site" evidence="1">
    <location>
        <position position="93"/>
    </location>
    <ligand>
        <name>substrate</name>
    </ligand>
</feature>
<feature type="binding site" evidence="1">
    <location>
        <begin position="94"/>
        <end position="96"/>
    </location>
    <ligand>
        <name>ATP</name>
        <dbReference type="ChEBI" id="CHEBI:30616"/>
    </ligand>
</feature>
<feature type="binding site" evidence="1">
    <location>
        <position position="104"/>
    </location>
    <ligand>
        <name>ATP</name>
        <dbReference type="ChEBI" id="CHEBI:30616"/>
    </ligand>
</feature>
<feature type="binding site" evidence="1">
    <location>
        <begin position="129"/>
        <end position="135"/>
    </location>
    <ligand>
        <name>ATP</name>
        <dbReference type="ChEBI" id="CHEBI:30616"/>
    </ligand>
</feature>
<feature type="site" description="Transition state stabilizer" evidence="1">
    <location>
        <position position="18"/>
    </location>
</feature>
<proteinExistence type="inferred from homology"/>
<sequence length="170" mass="18446">MARIGLYPGTFDPMTNGHLDIIRRGLKLVDHLIVAIGVNATKTPLLTLEERFQLIEQEAGPIAKELGSKISTASFSGLVVNAADEHGATVILRGLRGAVDFEYETQMVGMNRVMNPHVETVFLAASPDTQFISSTLVRQIAGMDGDISPFVPPHVKAKVLARVAEQKKSR</sequence>
<gene>
    <name evidence="1" type="primary">coaD</name>
    <name type="ordered locus">Plav_3050</name>
</gene>
<name>COAD_PARL1</name>
<evidence type="ECO:0000255" key="1">
    <source>
        <dbReference type="HAMAP-Rule" id="MF_00151"/>
    </source>
</evidence>
<reference key="1">
    <citation type="journal article" date="2011" name="Stand. Genomic Sci.">
        <title>Complete genome sequence of Parvibaculum lavamentivorans type strain (DS-1(T)).</title>
        <authorList>
            <person name="Schleheck D."/>
            <person name="Weiss M."/>
            <person name="Pitluck S."/>
            <person name="Bruce D."/>
            <person name="Land M.L."/>
            <person name="Han S."/>
            <person name="Saunders E."/>
            <person name="Tapia R."/>
            <person name="Detter C."/>
            <person name="Brettin T."/>
            <person name="Han J."/>
            <person name="Woyke T."/>
            <person name="Goodwin L."/>
            <person name="Pennacchio L."/>
            <person name="Nolan M."/>
            <person name="Cook A.M."/>
            <person name="Kjelleberg S."/>
            <person name="Thomas T."/>
        </authorList>
    </citation>
    <scope>NUCLEOTIDE SEQUENCE [LARGE SCALE GENOMIC DNA]</scope>
    <source>
        <strain>DS-1 / DSM 13023 / NCIMB 13966</strain>
    </source>
</reference>
<keyword id="KW-0067">ATP-binding</keyword>
<keyword id="KW-0173">Coenzyme A biosynthesis</keyword>
<keyword id="KW-0963">Cytoplasm</keyword>
<keyword id="KW-0460">Magnesium</keyword>
<keyword id="KW-0547">Nucleotide-binding</keyword>
<keyword id="KW-0548">Nucleotidyltransferase</keyword>
<keyword id="KW-1185">Reference proteome</keyword>
<keyword id="KW-0808">Transferase</keyword>
<comment type="function">
    <text evidence="1">Reversibly transfers an adenylyl group from ATP to 4'-phosphopantetheine, yielding dephospho-CoA (dPCoA) and pyrophosphate.</text>
</comment>
<comment type="catalytic activity">
    <reaction evidence="1">
        <text>(R)-4'-phosphopantetheine + ATP + H(+) = 3'-dephospho-CoA + diphosphate</text>
        <dbReference type="Rhea" id="RHEA:19801"/>
        <dbReference type="ChEBI" id="CHEBI:15378"/>
        <dbReference type="ChEBI" id="CHEBI:30616"/>
        <dbReference type="ChEBI" id="CHEBI:33019"/>
        <dbReference type="ChEBI" id="CHEBI:57328"/>
        <dbReference type="ChEBI" id="CHEBI:61723"/>
        <dbReference type="EC" id="2.7.7.3"/>
    </reaction>
</comment>
<comment type="cofactor">
    <cofactor evidence="1">
        <name>Mg(2+)</name>
        <dbReference type="ChEBI" id="CHEBI:18420"/>
    </cofactor>
</comment>
<comment type="pathway">
    <text evidence="1">Cofactor biosynthesis; coenzyme A biosynthesis; CoA from (R)-pantothenate: step 4/5.</text>
</comment>
<comment type="subunit">
    <text evidence="1">Homohexamer.</text>
</comment>
<comment type="subcellular location">
    <subcellularLocation>
        <location evidence="1">Cytoplasm</location>
    </subcellularLocation>
</comment>
<comment type="similarity">
    <text evidence="1">Belongs to the bacterial CoaD family.</text>
</comment>